<comment type="function">
    <text evidence="1">One of several proteins that assist in the late maturation steps of the functional core of the 30S ribosomal subunit. Associates with free 30S ribosomal subunits (but not with 30S subunits that are part of 70S ribosomes or polysomes). Required for efficient processing of 16S rRNA. May interact with the 5'-terminal helix region of 16S rRNA.</text>
</comment>
<comment type="subunit">
    <text evidence="1">Monomer. Binds 30S ribosomal subunits, but not 50S ribosomal subunits or 70S ribosomes.</text>
</comment>
<comment type="subcellular location">
    <subcellularLocation>
        <location evidence="1">Cytoplasm</location>
    </subcellularLocation>
</comment>
<comment type="similarity">
    <text evidence="1">Belongs to the RbfA family.</text>
</comment>
<sequence>MASYNRTRRIAEEIRKVVSTMLINGVKDPRITSMVSVTDVEVTNDLRYAYVYVSILGGDEESTLTGLKSAGGYIRREVGKNIKLRYIPEIVFKLDDSIEKGMYMDSLIKRVNEKNAQQNEDENYDE</sequence>
<feature type="chain" id="PRO_0000321213" description="Ribosome-binding factor A">
    <location>
        <begin position="1"/>
        <end position="126"/>
    </location>
</feature>
<name>RBFA_CLOD6</name>
<proteinExistence type="inferred from homology"/>
<organism>
    <name type="scientific">Clostridioides difficile (strain 630)</name>
    <name type="common">Peptoclostridium difficile</name>
    <dbReference type="NCBI Taxonomy" id="272563"/>
    <lineage>
        <taxon>Bacteria</taxon>
        <taxon>Bacillati</taxon>
        <taxon>Bacillota</taxon>
        <taxon>Clostridia</taxon>
        <taxon>Peptostreptococcales</taxon>
        <taxon>Peptostreptococcaceae</taxon>
        <taxon>Clostridioides</taxon>
    </lineage>
</organism>
<accession>Q18BH6</accession>
<dbReference type="EMBL" id="AM180355">
    <property type="protein sequence ID" value="CAJ68168.1"/>
    <property type="molecule type" value="Genomic_DNA"/>
</dbReference>
<dbReference type="RefSeq" id="WP_003428234.1">
    <property type="nucleotide sequence ID" value="NZ_JAUPES010000027.1"/>
</dbReference>
<dbReference type="RefSeq" id="YP_001087806.1">
    <property type="nucleotide sequence ID" value="NC_009089.1"/>
</dbReference>
<dbReference type="SMR" id="Q18BH6"/>
<dbReference type="GeneID" id="66353713"/>
<dbReference type="KEGG" id="pdc:CDIF630_01466"/>
<dbReference type="PATRIC" id="fig|272563.120.peg.1370"/>
<dbReference type="OrthoDB" id="307788at2"/>
<dbReference type="PhylomeDB" id="Q18BH6"/>
<dbReference type="BioCyc" id="PDIF272563:G12WB-1446-MONOMER"/>
<dbReference type="Proteomes" id="UP000001978">
    <property type="component" value="Chromosome"/>
</dbReference>
<dbReference type="GO" id="GO:0005829">
    <property type="term" value="C:cytosol"/>
    <property type="evidence" value="ECO:0007669"/>
    <property type="project" value="TreeGrafter"/>
</dbReference>
<dbReference type="GO" id="GO:0043024">
    <property type="term" value="F:ribosomal small subunit binding"/>
    <property type="evidence" value="ECO:0007669"/>
    <property type="project" value="TreeGrafter"/>
</dbReference>
<dbReference type="GO" id="GO:0030490">
    <property type="term" value="P:maturation of SSU-rRNA"/>
    <property type="evidence" value="ECO:0007669"/>
    <property type="project" value="UniProtKB-UniRule"/>
</dbReference>
<dbReference type="Gene3D" id="3.30.300.20">
    <property type="match status" value="1"/>
</dbReference>
<dbReference type="HAMAP" id="MF_00003">
    <property type="entry name" value="RbfA"/>
    <property type="match status" value="1"/>
</dbReference>
<dbReference type="InterPro" id="IPR015946">
    <property type="entry name" value="KH_dom-like_a/b"/>
</dbReference>
<dbReference type="InterPro" id="IPR000238">
    <property type="entry name" value="RbfA"/>
</dbReference>
<dbReference type="InterPro" id="IPR023799">
    <property type="entry name" value="RbfA_dom_sf"/>
</dbReference>
<dbReference type="InterPro" id="IPR020053">
    <property type="entry name" value="Ribosome-bd_factorA_CS"/>
</dbReference>
<dbReference type="NCBIfam" id="TIGR00082">
    <property type="entry name" value="rbfA"/>
    <property type="match status" value="1"/>
</dbReference>
<dbReference type="PANTHER" id="PTHR33515">
    <property type="entry name" value="RIBOSOME-BINDING FACTOR A, CHLOROPLASTIC-RELATED"/>
    <property type="match status" value="1"/>
</dbReference>
<dbReference type="PANTHER" id="PTHR33515:SF1">
    <property type="entry name" value="RIBOSOME-BINDING FACTOR A, CHLOROPLASTIC-RELATED"/>
    <property type="match status" value="1"/>
</dbReference>
<dbReference type="Pfam" id="PF02033">
    <property type="entry name" value="RBFA"/>
    <property type="match status" value="1"/>
</dbReference>
<dbReference type="SUPFAM" id="SSF89919">
    <property type="entry name" value="Ribosome-binding factor A, RbfA"/>
    <property type="match status" value="1"/>
</dbReference>
<dbReference type="PROSITE" id="PS01319">
    <property type="entry name" value="RBFA"/>
    <property type="match status" value="1"/>
</dbReference>
<protein>
    <recommendedName>
        <fullName evidence="1">Ribosome-binding factor A</fullName>
    </recommendedName>
</protein>
<keyword id="KW-0963">Cytoplasm</keyword>
<keyword id="KW-1185">Reference proteome</keyword>
<keyword id="KW-0690">Ribosome biogenesis</keyword>
<reference key="1">
    <citation type="journal article" date="2006" name="Nat. Genet.">
        <title>The multidrug-resistant human pathogen Clostridium difficile has a highly mobile, mosaic genome.</title>
        <authorList>
            <person name="Sebaihia M."/>
            <person name="Wren B.W."/>
            <person name="Mullany P."/>
            <person name="Fairweather N.F."/>
            <person name="Minton N."/>
            <person name="Stabler R."/>
            <person name="Thomson N.R."/>
            <person name="Roberts A.P."/>
            <person name="Cerdeno-Tarraga A.M."/>
            <person name="Wang H."/>
            <person name="Holden M.T.G."/>
            <person name="Wright A."/>
            <person name="Churcher C."/>
            <person name="Quail M.A."/>
            <person name="Baker S."/>
            <person name="Bason N."/>
            <person name="Brooks K."/>
            <person name="Chillingworth T."/>
            <person name="Cronin A."/>
            <person name="Davis P."/>
            <person name="Dowd L."/>
            <person name="Fraser A."/>
            <person name="Feltwell T."/>
            <person name="Hance Z."/>
            <person name="Holroyd S."/>
            <person name="Jagels K."/>
            <person name="Moule S."/>
            <person name="Mungall K."/>
            <person name="Price C."/>
            <person name="Rabbinowitsch E."/>
            <person name="Sharp S."/>
            <person name="Simmonds M."/>
            <person name="Stevens K."/>
            <person name="Unwin L."/>
            <person name="Whithead S."/>
            <person name="Dupuy B."/>
            <person name="Dougan G."/>
            <person name="Barrell B."/>
            <person name="Parkhill J."/>
        </authorList>
    </citation>
    <scope>NUCLEOTIDE SEQUENCE [LARGE SCALE GENOMIC DNA]</scope>
    <source>
        <strain>630</strain>
    </source>
</reference>
<gene>
    <name evidence="1" type="primary">rbfA</name>
    <name type="ordered locus">CD630_13100</name>
</gene>
<evidence type="ECO:0000255" key="1">
    <source>
        <dbReference type="HAMAP-Rule" id="MF_00003"/>
    </source>
</evidence>